<dbReference type="EMBL" id="U19104">
    <property type="protein sequence ID" value="AAB67279.1"/>
    <property type="molecule type" value="Genomic_DNA"/>
</dbReference>
<dbReference type="EMBL" id="AY558226">
    <property type="protein sequence ID" value="AAS56552.1"/>
    <property type="molecule type" value="Genomic_DNA"/>
</dbReference>
<dbReference type="EMBL" id="BK006945">
    <property type="protein sequence ID" value="DAA09686.1"/>
    <property type="molecule type" value="Genomic_DNA"/>
</dbReference>
<dbReference type="PIR" id="S51472">
    <property type="entry name" value="S51472"/>
</dbReference>
<dbReference type="RefSeq" id="NP_013489.1">
    <property type="nucleotide sequence ID" value="NM_001182274.1"/>
</dbReference>
<dbReference type="BioGRID" id="31644">
    <property type="interactions" value="105"/>
</dbReference>
<dbReference type="ComplexPortal" id="CPX-2122">
    <property type="entry name" value="Swr1 chromatin remodelling complex"/>
</dbReference>
<dbReference type="DIP" id="DIP-4645N"/>
<dbReference type="FunCoup" id="Q06707">
    <property type="interactions" value="85"/>
</dbReference>
<dbReference type="IntAct" id="Q06707">
    <property type="interactions" value="20"/>
</dbReference>
<dbReference type="MINT" id="Q06707"/>
<dbReference type="STRING" id="4932.YLR385C"/>
<dbReference type="PaxDb" id="4932-YLR385C"/>
<dbReference type="PeptideAtlas" id="Q06707"/>
<dbReference type="EnsemblFungi" id="YLR385C_mRNA">
    <property type="protein sequence ID" value="YLR385C"/>
    <property type="gene ID" value="YLR385C"/>
</dbReference>
<dbReference type="GeneID" id="851101"/>
<dbReference type="KEGG" id="sce:YLR385C"/>
<dbReference type="AGR" id="SGD:S000004377"/>
<dbReference type="SGD" id="S000004377">
    <property type="gene designation" value="SWC7"/>
</dbReference>
<dbReference type="VEuPathDB" id="FungiDB:YLR385C"/>
<dbReference type="eggNOG" id="ENOG502S4GP">
    <property type="taxonomic scope" value="Eukaryota"/>
</dbReference>
<dbReference type="HOGENOM" id="CLU_157410_0_0_1"/>
<dbReference type="InParanoid" id="Q06707"/>
<dbReference type="OMA" id="TLANHYY"/>
<dbReference type="OrthoDB" id="4067990at2759"/>
<dbReference type="BioCyc" id="YEAST:G3O-32451-MONOMER"/>
<dbReference type="PRO" id="PR:Q06707"/>
<dbReference type="Proteomes" id="UP000002311">
    <property type="component" value="Chromosome XII"/>
</dbReference>
<dbReference type="RNAct" id="Q06707">
    <property type="molecule type" value="protein"/>
</dbReference>
<dbReference type="GO" id="GO:0000785">
    <property type="term" value="C:chromatin"/>
    <property type="evidence" value="ECO:0000314"/>
    <property type="project" value="ComplexPortal"/>
</dbReference>
<dbReference type="GO" id="GO:0005634">
    <property type="term" value="C:nucleus"/>
    <property type="evidence" value="ECO:0007005"/>
    <property type="project" value="SGD"/>
</dbReference>
<dbReference type="GO" id="GO:0000812">
    <property type="term" value="C:Swr1 complex"/>
    <property type="evidence" value="ECO:0000314"/>
    <property type="project" value="SGD"/>
</dbReference>
<dbReference type="GO" id="GO:0006338">
    <property type="term" value="P:chromatin remodeling"/>
    <property type="evidence" value="ECO:0000353"/>
    <property type="project" value="SGD"/>
</dbReference>
<dbReference type="GO" id="GO:0006355">
    <property type="term" value="P:regulation of DNA-templated transcription"/>
    <property type="evidence" value="ECO:0000303"/>
    <property type="project" value="ComplexPortal"/>
</dbReference>
<dbReference type="InterPro" id="IPR020195">
    <property type="entry name" value="SWR1_Swc7"/>
</dbReference>
<dbReference type="Pfam" id="PF17330">
    <property type="entry name" value="SWC7"/>
    <property type="match status" value="1"/>
</dbReference>
<accession>Q06707</accession>
<accession>D6VZ20</accession>
<keyword id="KW-0010">Activator</keyword>
<keyword id="KW-0156">Chromatin regulator</keyword>
<keyword id="KW-0539">Nucleus</keyword>
<keyword id="KW-1185">Reference proteome</keyword>
<keyword id="KW-0804">Transcription</keyword>
<keyword id="KW-0805">Transcription regulation</keyword>
<reference key="1">
    <citation type="journal article" date="1997" name="Nature">
        <title>The nucleotide sequence of Saccharomyces cerevisiae chromosome XII.</title>
        <authorList>
            <person name="Johnston M."/>
            <person name="Hillier L.W."/>
            <person name="Riles L."/>
            <person name="Albermann K."/>
            <person name="Andre B."/>
            <person name="Ansorge W."/>
            <person name="Benes V."/>
            <person name="Brueckner M."/>
            <person name="Delius H."/>
            <person name="Dubois E."/>
            <person name="Duesterhoeft A."/>
            <person name="Entian K.-D."/>
            <person name="Floeth M."/>
            <person name="Goffeau A."/>
            <person name="Hebling U."/>
            <person name="Heumann K."/>
            <person name="Heuss-Neitzel D."/>
            <person name="Hilbert H."/>
            <person name="Hilger F."/>
            <person name="Kleine K."/>
            <person name="Koetter P."/>
            <person name="Louis E.J."/>
            <person name="Messenguy F."/>
            <person name="Mewes H.-W."/>
            <person name="Miosga T."/>
            <person name="Moestl D."/>
            <person name="Mueller-Auer S."/>
            <person name="Nentwich U."/>
            <person name="Obermaier B."/>
            <person name="Piravandi E."/>
            <person name="Pohl T.M."/>
            <person name="Portetelle D."/>
            <person name="Purnelle B."/>
            <person name="Rechmann S."/>
            <person name="Rieger M."/>
            <person name="Rinke M."/>
            <person name="Rose M."/>
            <person name="Scharfe M."/>
            <person name="Scherens B."/>
            <person name="Scholler P."/>
            <person name="Schwager C."/>
            <person name="Schwarz S."/>
            <person name="Underwood A.P."/>
            <person name="Urrestarazu L.A."/>
            <person name="Vandenbol M."/>
            <person name="Verhasselt P."/>
            <person name="Vierendeels F."/>
            <person name="Voet M."/>
            <person name="Volckaert G."/>
            <person name="Voss H."/>
            <person name="Wambutt R."/>
            <person name="Wedler E."/>
            <person name="Wedler H."/>
            <person name="Zimmermann F.K."/>
            <person name="Zollner A."/>
            <person name="Hani J."/>
            <person name="Hoheisel J.D."/>
        </authorList>
    </citation>
    <scope>NUCLEOTIDE SEQUENCE [LARGE SCALE GENOMIC DNA]</scope>
    <source>
        <strain>ATCC 204508 / S288c</strain>
    </source>
</reference>
<reference key="2">
    <citation type="journal article" date="2014" name="G3 (Bethesda)">
        <title>The reference genome sequence of Saccharomyces cerevisiae: Then and now.</title>
        <authorList>
            <person name="Engel S.R."/>
            <person name="Dietrich F.S."/>
            <person name="Fisk D.G."/>
            <person name="Binkley G."/>
            <person name="Balakrishnan R."/>
            <person name="Costanzo M.C."/>
            <person name="Dwight S.S."/>
            <person name="Hitz B.C."/>
            <person name="Karra K."/>
            <person name="Nash R.S."/>
            <person name="Weng S."/>
            <person name="Wong E.D."/>
            <person name="Lloyd P."/>
            <person name="Skrzypek M.S."/>
            <person name="Miyasato S.R."/>
            <person name="Simison M."/>
            <person name="Cherry J.M."/>
        </authorList>
    </citation>
    <scope>GENOME REANNOTATION</scope>
    <source>
        <strain>ATCC 204508 / S288c</strain>
    </source>
</reference>
<reference key="3">
    <citation type="journal article" date="2007" name="Genome Res.">
        <title>Approaching a complete repository of sequence-verified protein-encoding clones for Saccharomyces cerevisiae.</title>
        <authorList>
            <person name="Hu Y."/>
            <person name="Rolfs A."/>
            <person name="Bhullar B."/>
            <person name="Murthy T.V.S."/>
            <person name="Zhu C."/>
            <person name="Berger M.F."/>
            <person name="Camargo A.A."/>
            <person name="Kelley F."/>
            <person name="McCarron S."/>
            <person name="Jepson D."/>
            <person name="Richardson A."/>
            <person name="Raphael J."/>
            <person name="Moreira D."/>
            <person name="Taycher E."/>
            <person name="Zuo D."/>
            <person name="Mohr S."/>
            <person name="Kane M.F."/>
            <person name="Williamson J."/>
            <person name="Simpson A.J.G."/>
            <person name="Bulyk M.L."/>
            <person name="Harlow E."/>
            <person name="Marsischky G."/>
            <person name="Kolodner R.D."/>
            <person name="LaBaer J."/>
        </authorList>
    </citation>
    <scope>NUCLEOTIDE SEQUENCE [GENOMIC DNA]</scope>
    <source>
        <strain>ATCC 204508 / S288c</strain>
    </source>
</reference>
<reference key="4">
    <citation type="journal article" date="2003" name="Mol. Cell">
        <title>A Snf2 family ATPase complex required for recruitment of the histone H2A variant Htz1.</title>
        <authorList>
            <person name="Krogan N.J."/>
            <person name="Keogh M.-C."/>
            <person name="Datta N."/>
            <person name="Sawa C."/>
            <person name="Ryan O.W."/>
            <person name="Ding H."/>
            <person name="Haw R.A."/>
            <person name="Pootoolal J."/>
            <person name="Tong A."/>
            <person name="Canadien V."/>
            <person name="Richards D.P."/>
            <person name="Wu X."/>
            <person name="Emili A."/>
            <person name="Hughes T.R."/>
            <person name="Buratowski S."/>
            <person name="Greenblatt J.F."/>
        </authorList>
    </citation>
    <scope>IDENTIFICATION IN THE SWR1 COMPLEX</scope>
    <scope>FUNCTION OF THE SWR1 COMPLEX</scope>
    <scope>IDENTIFICATION BY MASS SPECTROMETRY</scope>
</reference>
<reference key="5">
    <citation type="journal article" date="2003" name="Nature">
        <title>Global analysis of protein localization in budding yeast.</title>
        <authorList>
            <person name="Huh W.-K."/>
            <person name="Falvo J.V."/>
            <person name="Gerke L.C."/>
            <person name="Carroll A.S."/>
            <person name="Howson R.W."/>
            <person name="Weissman J.S."/>
            <person name="O'Shea E.K."/>
        </authorList>
    </citation>
    <scope>SUBCELLULAR LOCATION [LARGE SCALE ANALYSIS]</scope>
</reference>
<reference key="6">
    <citation type="journal article" date="2003" name="Nature">
        <title>Global analysis of protein expression in yeast.</title>
        <authorList>
            <person name="Ghaemmaghami S."/>
            <person name="Huh W.-K."/>
            <person name="Bower K."/>
            <person name="Howson R.W."/>
            <person name="Belle A."/>
            <person name="Dephoure N."/>
            <person name="O'Shea E.K."/>
            <person name="Weissman J.S."/>
        </authorList>
    </citation>
    <scope>LEVEL OF PROTEIN EXPRESSION [LARGE SCALE ANALYSIS]</scope>
</reference>
<reference key="7">
    <citation type="journal article" date="2004" name="PLoS Biol.">
        <title>A protein complex containing the conserved Swi2/Snf2-related ATPase Swr1p deposits histone variant H2A.Z into euchromatin.</title>
        <authorList>
            <person name="Kobor M.S."/>
            <person name="Venkatasubrahmanyam S."/>
            <person name="Meneghini M.D."/>
            <person name="Gin J.W."/>
            <person name="Jennings J.L."/>
            <person name="Link A.J."/>
            <person name="Madhani H.D."/>
            <person name="Rine J."/>
        </authorList>
    </citation>
    <scope>IDENTIFICATION IN THE SWR1 COMPLEX</scope>
    <scope>FUNCTION OF THE SWR1 COMPLEX</scope>
    <scope>IDENTIFICATION BY MASS SPECTROMETRY</scope>
</reference>
<gene>
    <name type="primary">SWC7</name>
    <name type="synonym">AWS1</name>
    <name type="ordered locus">YLR385C</name>
</gene>
<protein>
    <recommendedName>
        <fullName>SWR1-complex protein 7</fullName>
    </recommendedName>
</protein>
<organism>
    <name type="scientific">Saccharomyces cerevisiae (strain ATCC 204508 / S288c)</name>
    <name type="common">Baker's yeast</name>
    <dbReference type="NCBI Taxonomy" id="559292"/>
    <lineage>
        <taxon>Eukaryota</taxon>
        <taxon>Fungi</taxon>
        <taxon>Dikarya</taxon>
        <taxon>Ascomycota</taxon>
        <taxon>Saccharomycotina</taxon>
        <taxon>Saccharomycetes</taxon>
        <taxon>Saccharomycetales</taxon>
        <taxon>Saccharomycetaceae</taxon>
        <taxon>Saccharomyces</taxon>
    </lineage>
</organism>
<evidence type="ECO:0000269" key="1">
    <source>
    </source>
</evidence>
<evidence type="ECO:0000269" key="2">
    <source>
    </source>
</evidence>
<evidence type="ECO:0000269" key="3">
    <source>
    </source>
</evidence>
<evidence type="ECO:0000269" key="4">
    <source>
    </source>
</evidence>
<evidence type="ECO:0000305" key="5"/>
<sequence length="132" mass="15121">MDCPSNVVLLLLQLVLQRQQTLAHRDKSVDLQTLLKDPVIDNDVLVEFKTHKLVQLYGPQYCRDISLRGLKTMVTDIFANGIPKNAQSSGNDQPVTVVDLANYYYMQRINELQNTELPQLKEALLTRLEHMI</sequence>
<proteinExistence type="evidence at protein level"/>
<feature type="chain" id="PRO_0000072346" description="SWR1-complex protein 7">
    <location>
        <begin position="1"/>
        <end position="132"/>
    </location>
</feature>
<comment type="function">
    <text evidence="3 4">Component of the SWR1 complex which mediates the ATP-dependent exchange of histone H2A for the H2A variant HZT1 leading to transcriptional regulation of selected genes by chromatin remodeling.</text>
</comment>
<comment type="subunit">
    <text evidence="3 4">Component of the SWR1 chromatin remodeling complex composed of at least ACT1, ARP4, RVB1, RVB2, ARP6, YAF9, VPS71, VPS72, SWC3, SWC4, SWC5, SWC7 and SWR1, and perhaps BDF1.</text>
</comment>
<comment type="subcellular location">
    <subcellularLocation>
        <location evidence="1">Nucleus</location>
    </subcellularLocation>
</comment>
<comment type="miscellaneous">
    <text evidence="2">Present with 4240 molecules/cell in log phase SD medium.</text>
</comment>
<comment type="similarity">
    <text evidence="5">Belongs to the SWC7 family.</text>
</comment>
<name>SWC7_YEAST</name>